<accession>P52677</accession>
<feature type="chain" id="PRO_0000105734" description="Probable hydrogen peroxide-inducible genes activator">
    <location>
        <begin position="1"/>
        <end position="311"/>
    </location>
</feature>
<feature type="domain" description="HTH lysR-type" evidence="1">
    <location>
        <begin position="8"/>
        <end position="65"/>
    </location>
</feature>
<feature type="DNA-binding region" description="H-T-H motif" evidence="1">
    <location>
        <begin position="25"/>
        <end position="44"/>
    </location>
</feature>
<dbReference type="EMBL" id="U18263">
    <property type="protein sequence ID" value="AAA79918.1"/>
    <property type="molecule type" value="Genomic_DNA"/>
</dbReference>
<dbReference type="PIR" id="T09656">
    <property type="entry name" value="T09656"/>
</dbReference>
<dbReference type="RefSeq" id="WP_009976952.1">
    <property type="nucleotide sequence ID" value="NZ_JAIZBQ010000011.1"/>
</dbReference>
<dbReference type="SMR" id="P52677"/>
<dbReference type="GO" id="GO:0032993">
    <property type="term" value="C:protein-DNA complex"/>
    <property type="evidence" value="ECO:0007669"/>
    <property type="project" value="TreeGrafter"/>
</dbReference>
<dbReference type="GO" id="GO:0003677">
    <property type="term" value="F:DNA binding"/>
    <property type="evidence" value="ECO:0007669"/>
    <property type="project" value="UniProtKB-KW"/>
</dbReference>
<dbReference type="GO" id="GO:0003700">
    <property type="term" value="F:DNA-binding transcription factor activity"/>
    <property type="evidence" value="ECO:0007669"/>
    <property type="project" value="InterPro"/>
</dbReference>
<dbReference type="CDD" id="cd08411">
    <property type="entry name" value="PBP2_OxyR"/>
    <property type="match status" value="1"/>
</dbReference>
<dbReference type="FunFam" id="1.10.10.10:FF:000001">
    <property type="entry name" value="LysR family transcriptional regulator"/>
    <property type="match status" value="1"/>
</dbReference>
<dbReference type="Gene3D" id="3.40.190.10">
    <property type="entry name" value="Periplasmic binding protein-like II"/>
    <property type="match status" value="2"/>
</dbReference>
<dbReference type="Gene3D" id="1.10.10.10">
    <property type="entry name" value="Winged helix-like DNA-binding domain superfamily/Winged helix DNA-binding domain"/>
    <property type="match status" value="1"/>
</dbReference>
<dbReference type="InterPro" id="IPR005119">
    <property type="entry name" value="LysR_subst-bd"/>
</dbReference>
<dbReference type="InterPro" id="IPR000847">
    <property type="entry name" value="Tscrpt_reg_HTH_LysR"/>
</dbReference>
<dbReference type="InterPro" id="IPR036388">
    <property type="entry name" value="WH-like_DNA-bd_sf"/>
</dbReference>
<dbReference type="InterPro" id="IPR036390">
    <property type="entry name" value="WH_DNA-bd_sf"/>
</dbReference>
<dbReference type="PANTHER" id="PTHR30346:SF26">
    <property type="entry name" value="HYDROGEN PEROXIDE-INDUCIBLE GENES ACTIVATOR"/>
    <property type="match status" value="1"/>
</dbReference>
<dbReference type="PANTHER" id="PTHR30346">
    <property type="entry name" value="TRANSCRIPTIONAL DUAL REGULATOR HCAR-RELATED"/>
    <property type="match status" value="1"/>
</dbReference>
<dbReference type="Pfam" id="PF00126">
    <property type="entry name" value="HTH_1"/>
    <property type="match status" value="1"/>
</dbReference>
<dbReference type="Pfam" id="PF03466">
    <property type="entry name" value="LysR_substrate"/>
    <property type="match status" value="1"/>
</dbReference>
<dbReference type="PRINTS" id="PR00039">
    <property type="entry name" value="HTHLYSR"/>
</dbReference>
<dbReference type="SUPFAM" id="SSF53850">
    <property type="entry name" value="Periplasmic binding protein-like II"/>
    <property type="match status" value="1"/>
</dbReference>
<dbReference type="SUPFAM" id="SSF46785">
    <property type="entry name" value="Winged helix' DNA-binding domain"/>
    <property type="match status" value="1"/>
</dbReference>
<dbReference type="PROSITE" id="PS50931">
    <property type="entry name" value="HTH_LYSR"/>
    <property type="match status" value="1"/>
</dbReference>
<name>OXYR_MYCAV</name>
<evidence type="ECO:0000255" key="1">
    <source>
        <dbReference type="PROSITE-ProRule" id="PRU00253"/>
    </source>
</evidence>
<evidence type="ECO:0000305" key="2"/>
<sequence>MPDKTYQPTIAGLRAFVAVAEKRQFSGAATALGVSQSTLSQVLAALEAGLGTQLVERSTRRVFLTPQGAELLPHAQAVVEAADAFTAAAAGSTDPLRAGMRLGLIPTVVPYVLPTVLAGIAERRPGLTLRVTEDQTERLLAVLREGALDAALIALPAETAGVTAIPIYDEDFVLALPPGHPLAGKRRVPATALADLPLLLLDEGHCLRDQALDVCHKAGVRAELANTRAASLATAVQCVTGGLGVTLIPQSAVPVEASRSRLGLAQFAAPRPGRRIGLVFRSSSGRDDSYRELAGLIGELISSQHQVRLVK</sequence>
<reference key="1">
    <citation type="journal article" date="1995" name="Proc. Natl. Acad. Sci. U.S.A.">
        <title>Disparate responses to oxidative stress in saprophytic and pathogenic mycobacteria.</title>
        <authorList>
            <person name="Sherman D.R."/>
            <person name="Sabo P.J."/>
            <person name="Hickey M.J."/>
            <person name="Arain T.M."/>
            <person name="Mahairas G.G."/>
            <person name="Yuan Y."/>
            <person name="Barry C.E. III"/>
            <person name="Stover C.K."/>
        </authorList>
    </citation>
    <scope>NUCLEOTIDE SEQUENCE [GENOMIC DNA]</scope>
</reference>
<comment type="function">
    <text>Required for the induction the katG gene for catalase. Involved in the response to hydrogen peroxide.</text>
</comment>
<comment type="similarity">
    <text evidence="2">Belongs to the LysR transcriptional regulatory family.</text>
</comment>
<keyword id="KW-0010">Activator</keyword>
<keyword id="KW-0238">DNA-binding</keyword>
<keyword id="KW-0804">Transcription</keyword>
<keyword id="KW-0805">Transcription regulation</keyword>
<gene>
    <name type="primary">oxyR</name>
</gene>
<organism>
    <name type="scientific">Mycobacterium avium</name>
    <dbReference type="NCBI Taxonomy" id="1764"/>
    <lineage>
        <taxon>Bacteria</taxon>
        <taxon>Bacillati</taxon>
        <taxon>Actinomycetota</taxon>
        <taxon>Actinomycetes</taxon>
        <taxon>Mycobacteriales</taxon>
        <taxon>Mycobacteriaceae</taxon>
        <taxon>Mycobacterium</taxon>
        <taxon>Mycobacterium avium complex (MAC)</taxon>
    </lineage>
</organism>
<proteinExistence type="inferred from homology"/>
<protein>
    <recommendedName>
        <fullName>Probable hydrogen peroxide-inducible genes activator</fullName>
    </recommendedName>
</protein>